<dbReference type="EMBL" id="AE000783">
    <property type="protein sequence ID" value="AAC66774.2"/>
    <property type="molecule type" value="Genomic_DNA"/>
</dbReference>
<dbReference type="PIR" id="F70148">
    <property type="entry name" value="F70148"/>
</dbReference>
<dbReference type="RefSeq" id="NP_212525.2">
    <property type="nucleotide sequence ID" value="NC_001318.1"/>
</dbReference>
<dbReference type="RefSeq" id="WP_002657848.1">
    <property type="nucleotide sequence ID" value="NC_001318.1"/>
</dbReference>
<dbReference type="PDB" id="8FMW">
    <property type="method" value="EM"/>
    <property type="resolution" value="2.86 A"/>
    <property type="chains" value="AJ=1-162"/>
</dbReference>
<dbReference type="PDB" id="8FN2">
    <property type="method" value="EM"/>
    <property type="resolution" value="3.40 A"/>
    <property type="chains" value="J=1-162"/>
</dbReference>
<dbReference type="PDBsum" id="8FMW"/>
<dbReference type="PDBsum" id="8FN2"/>
<dbReference type="EMDB" id="EMD-29298"/>
<dbReference type="EMDB" id="EMD-29304"/>
<dbReference type="SMR" id="O51352"/>
<dbReference type="STRING" id="224326.BB_0391"/>
<dbReference type="PaxDb" id="224326-BB_0391"/>
<dbReference type="EnsemblBacteria" id="AAC66774">
    <property type="protein sequence ID" value="AAC66774"/>
    <property type="gene ID" value="BB_0391"/>
</dbReference>
<dbReference type="GeneID" id="56567819"/>
<dbReference type="KEGG" id="bbu:BB_0391"/>
<dbReference type="PATRIC" id="fig|224326.49.peg.786"/>
<dbReference type="HOGENOM" id="CLU_092227_1_2_12"/>
<dbReference type="OrthoDB" id="9808307at2"/>
<dbReference type="Proteomes" id="UP000001807">
    <property type="component" value="Chromosome"/>
</dbReference>
<dbReference type="GO" id="GO:0005829">
    <property type="term" value="C:cytosol"/>
    <property type="evidence" value="ECO:0000314"/>
    <property type="project" value="CAFA"/>
</dbReference>
<dbReference type="GO" id="GO:0015934">
    <property type="term" value="C:large ribosomal subunit"/>
    <property type="evidence" value="ECO:0007669"/>
    <property type="project" value="InterPro"/>
</dbReference>
<dbReference type="GO" id="GO:0070180">
    <property type="term" value="F:large ribosomal subunit rRNA binding"/>
    <property type="evidence" value="ECO:0007669"/>
    <property type="project" value="UniProtKB-UniRule"/>
</dbReference>
<dbReference type="GO" id="GO:0003735">
    <property type="term" value="F:structural constituent of ribosome"/>
    <property type="evidence" value="ECO:0007669"/>
    <property type="project" value="InterPro"/>
</dbReference>
<dbReference type="GO" id="GO:0006412">
    <property type="term" value="P:translation"/>
    <property type="evidence" value="ECO:0007669"/>
    <property type="project" value="UniProtKB-UniRule"/>
</dbReference>
<dbReference type="CDD" id="cd05797">
    <property type="entry name" value="Ribosomal_L10"/>
    <property type="match status" value="1"/>
</dbReference>
<dbReference type="FunFam" id="3.30.70.1730:FF:000028">
    <property type="entry name" value="50S ribosomal protein L10"/>
    <property type="match status" value="1"/>
</dbReference>
<dbReference type="Gene3D" id="3.30.70.1730">
    <property type="match status" value="1"/>
</dbReference>
<dbReference type="Gene3D" id="6.10.250.2350">
    <property type="match status" value="1"/>
</dbReference>
<dbReference type="HAMAP" id="MF_00362">
    <property type="entry name" value="Ribosomal_uL10"/>
    <property type="match status" value="1"/>
</dbReference>
<dbReference type="InterPro" id="IPR001790">
    <property type="entry name" value="Ribosomal_uL10"/>
</dbReference>
<dbReference type="InterPro" id="IPR043141">
    <property type="entry name" value="Ribosomal_uL10-like_sf"/>
</dbReference>
<dbReference type="InterPro" id="IPR022973">
    <property type="entry name" value="Ribosomal_uL10_bac"/>
</dbReference>
<dbReference type="InterPro" id="IPR047865">
    <property type="entry name" value="Ribosomal_uL10_bac_type"/>
</dbReference>
<dbReference type="InterPro" id="IPR002363">
    <property type="entry name" value="Ribosomal_uL10_CS_bac"/>
</dbReference>
<dbReference type="NCBIfam" id="NF000955">
    <property type="entry name" value="PRK00099.1-1"/>
    <property type="match status" value="1"/>
</dbReference>
<dbReference type="PANTHER" id="PTHR11560">
    <property type="entry name" value="39S RIBOSOMAL PROTEIN L10, MITOCHONDRIAL"/>
    <property type="match status" value="1"/>
</dbReference>
<dbReference type="Pfam" id="PF00466">
    <property type="entry name" value="Ribosomal_L10"/>
    <property type="match status" value="1"/>
</dbReference>
<dbReference type="SUPFAM" id="SSF160369">
    <property type="entry name" value="Ribosomal protein L10-like"/>
    <property type="match status" value="1"/>
</dbReference>
<dbReference type="PROSITE" id="PS01109">
    <property type="entry name" value="RIBOSOMAL_L10"/>
    <property type="match status" value="1"/>
</dbReference>
<feature type="chain" id="PRO_0000154594" description="Large ribosomal subunit protein uL10">
    <location>
        <begin position="1"/>
        <end position="162"/>
    </location>
</feature>
<feature type="helix" evidence="3">
    <location>
        <begin position="3"/>
        <end position="22"/>
    </location>
</feature>
<feature type="strand" evidence="3">
    <location>
        <begin position="24"/>
        <end position="30"/>
    </location>
</feature>
<feature type="helix" evidence="3">
    <location>
        <begin position="36"/>
        <end position="48"/>
    </location>
</feature>
<feature type="strand" evidence="3">
    <location>
        <begin position="52"/>
        <end position="55"/>
    </location>
</feature>
<feature type="helix" evidence="3">
    <location>
        <begin position="58"/>
        <end position="67"/>
    </location>
</feature>
<feature type="helix" evidence="3">
    <location>
        <begin position="74"/>
        <end position="76"/>
    </location>
</feature>
<feature type="strand" evidence="3">
    <location>
        <begin position="78"/>
        <end position="88"/>
    </location>
</feature>
<feature type="helix" evidence="3">
    <location>
        <begin position="90"/>
        <end position="103"/>
    </location>
</feature>
<feature type="strand" evidence="3">
    <location>
        <begin position="107"/>
        <end position="113"/>
    </location>
</feature>
<feature type="strand" evidence="3">
    <location>
        <begin position="116"/>
        <end position="118"/>
    </location>
</feature>
<feature type="helix" evidence="3">
    <location>
        <begin position="120"/>
        <end position="128"/>
    </location>
</feature>
<reference key="1">
    <citation type="journal article" date="1997" name="Nature">
        <title>Genomic sequence of a Lyme disease spirochaete, Borrelia burgdorferi.</title>
        <authorList>
            <person name="Fraser C.M."/>
            <person name="Casjens S."/>
            <person name="Huang W.M."/>
            <person name="Sutton G.G."/>
            <person name="Clayton R.A."/>
            <person name="Lathigra R."/>
            <person name="White O."/>
            <person name="Ketchum K.A."/>
            <person name="Dodson R.J."/>
            <person name="Hickey E.K."/>
            <person name="Gwinn M.L."/>
            <person name="Dougherty B.A."/>
            <person name="Tomb J.-F."/>
            <person name="Fleischmann R.D."/>
            <person name="Richardson D.L."/>
            <person name="Peterson J.D."/>
            <person name="Kerlavage A.R."/>
            <person name="Quackenbush J."/>
            <person name="Salzberg S.L."/>
            <person name="Hanson M."/>
            <person name="van Vugt R."/>
            <person name="Palmer N."/>
            <person name="Adams M.D."/>
            <person name="Gocayne J.D."/>
            <person name="Weidman J.F."/>
            <person name="Utterback T.R."/>
            <person name="Watthey L."/>
            <person name="McDonald L.A."/>
            <person name="Artiach P."/>
            <person name="Bowman C."/>
            <person name="Garland S.A."/>
            <person name="Fujii C."/>
            <person name="Cotton M.D."/>
            <person name="Horst K."/>
            <person name="Roberts K.M."/>
            <person name="Hatch B."/>
            <person name="Smith H.O."/>
            <person name="Venter J.C."/>
        </authorList>
    </citation>
    <scope>NUCLEOTIDE SEQUENCE [LARGE SCALE GENOMIC DNA]</scope>
    <source>
        <strain>ATCC 35210 / DSM 4680 / CIP 102532 / B31</strain>
    </source>
</reference>
<protein>
    <recommendedName>
        <fullName evidence="2">Large ribosomal subunit protein uL10</fullName>
    </recommendedName>
    <alternativeName>
        <fullName>50S ribosomal protein L10</fullName>
    </alternativeName>
</protein>
<proteinExistence type="evidence at protein level"/>
<comment type="function">
    <text evidence="1">Forms part of the ribosomal stalk, playing a central role in the interaction of the ribosome with GTP-bound translation factors.</text>
</comment>
<comment type="subunit">
    <text evidence="1">Part of the ribosomal stalk of the 50S ribosomal subunit. The N-terminus interacts with L11 and the large rRNA to form the base of the stalk. The C-terminus forms an elongated spine to which L12 dimers bind in a sequential fashion forming a multimeric L10(L12)X complex (By similarity).</text>
</comment>
<comment type="similarity">
    <text evidence="2">Belongs to the universal ribosomal protein uL10 family.</text>
</comment>
<accession>O51352</accession>
<keyword id="KW-0002">3D-structure</keyword>
<keyword id="KW-1185">Reference proteome</keyword>
<keyword id="KW-0687">Ribonucleoprotein</keyword>
<keyword id="KW-0689">Ribosomal protein</keyword>
<keyword id="KW-0694">RNA-binding</keyword>
<keyword id="KW-0699">rRNA-binding</keyword>
<gene>
    <name type="primary">rplJ</name>
    <name type="ordered locus">BB_0391</name>
</gene>
<organism>
    <name type="scientific">Borreliella burgdorferi (strain ATCC 35210 / DSM 4680 / CIP 102532 / B31)</name>
    <name type="common">Borrelia burgdorferi</name>
    <dbReference type="NCBI Taxonomy" id="224326"/>
    <lineage>
        <taxon>Bacteria</taxon>
        <taxon>Pseudomonadati</taxon>
        <taxon>Spirochaetota</taxon>
        <taxon>Spirochaetia</taxon>
        <taxon>Spirochaetales</taxon>
        <taxon>Borreliaceae</taxon>
        <taxon>Borreliella</taxon>
    </lineage>
</organism>
<evidence type="ECO:0000250" key="1"/>
<evidence type="ECO:0000305" key="2"/>
<evidence type="ECO:0007829" key="3">
    <source>
        <dbReference type="PDB" id="8FN2"/>
    </source>
</evidence>
<sequence length="162" mass="18059">MSAKINAKKLEMFDLLKQFIDSKQNLFFLDYRGLNVAQLTELRNKIEGEHGSLKVVKNNIMKMVLKEKNINVVDSCLVGPTVVVTALEEANVIAKIFYDFVKSSTLKVKGGFVLGEFYDEAKVQAYSKLPTKKESISLFASVLKAPVSKLARTLKALADVKN</sequence>
<name>RL10_BORBU</name>